<name>KRP4_ORYSJ</name>
<accession>Q7XDH8</accession>
<accession>A3C5N3</accession>
<accession>B7EMP9</accession>
<accession>Q283L1</accession>
<accession>Q9FW65</accession>
<organism>
    <name type="scientific">Oryza sativa subsp. japonica</name>
    <name type="common">Rice</name>
    <dbReference type="NCBI Taxonomy" id="39947"/>
    <lineage>
        <taxon>Eukaryota</taxon>
        <taxon>Viridiplantae</taxon>
        <taxon>Streptophyta</taxon>
        <taxon>Embryophyta</taxon>
        <taxon>Tracheophyta</taxon>
        <taxon>Spermatophyta</taxon>
        <taxon>Magnoliopsida</taxon>
        <taxon>Liliopsida</taxon>
        <taxon>Poales</taxon>
        <taxon>Poaceae</taxon>
        <taxon>BOP clade</taxon>
        <taxon>Oryzoideae</taxon>
        <taxon>Oryzeae</taxon>
        <taxon>Oryzinae</taxon>
        <taxon>Oryza</taxon>
        <taxon>Oryza sativa</taxon>
    </lineage>
</organism>
<dbReference type="EMBL" id="DQ229365">
    <property type="protein sequence ID" value="ABB70061.1"/>
    <property type="molecule type" value="mRNA"/>
</dbReference>
<dbReference type="EMBL" id="AC069145">
    <property type="protein sequence ID" value="AAG16867.1"/>
    <property type="status" value="ALT_SEQ"/>
    <property type="molecule type" value="Genomic_DNA"/>
</dbReference>
<dbReference type="EMBL" id="DP000086">
    <property type="protein sequence ID" value="AAP54233.2"/>
    <property type="molecule type" value="Genomic_DNA"/>
</dbReference>
<dbReference type="EMBL" id="AP008216">
    <property type="protein sequence ID" value="BAF26743.1"/>
    <property type="molecule type" value="Genomic_DNA"/>
</dbReference>
<dbReference type="EMBL" id="AP014966">
    <property type="protein sequence ID" value="BAT11263.1"/>
    <property type="molecule type" value="Genomic_DNA"/>
</dbReference>
<dbReference type="EMBL" id="CM000147">
    <property type="protein sequence ID" value="EAZ16396.1"/>
    <property type="molecule type" value="Genomic_DNA"/>
</dbReference>
<dbReference type="EMBL" id="AK073804">
    <property type="protein sequence ID" value="BAG93646.1"/>
    <property type="molecule type" value="mRNA"/>
</dbReference>
<dbReference type="RefSeq" id="XP_015612960.1">
    <property type="nucleotide sequence ID" value="XM_015757474.1"/>
</dbReference>
<dbReference type="FunCoup" id="Q7XDH8">
    <property type="interactions" value="140"/>
</dbReference>
<dbReference type="STRING" id="39947.Q7XDH8"/>
<dbReference type="PaxDb" id="39947-Q7XDH8"/>
<dbReference type="EnsemblPlants" id="Os10t0471700-02">
    <property type="protein sequence ID" value="Os10t0471700-02"/>
    <property type="gene ID" value="Os10g0471700"/>
</dbReference>
<dbReference type="Gramene" id="Os10t0471700-02">
    <property type="protein sequence ID" value="Os10t0471700-02"/>
    <property type="gene ID" value="Os10g0471700"/>
</dbReference>
<dbReference type="KEGG" id="dosa:Os10g0471700"/>
<dbReference type="eggNOG" id="ENOG502QXA1">
    <property type="taxonomic scope" value="Eukaryota"/>
</dbReference>
<dbReference type="HOGENOM" id="CLU_083146_0_1_1"/>
<dbReference type="InParanoid" id="Q7XDH8"/>
<dbReference type="OMA" id="HTPTSHE"/>
<dbReference type="OrthoDB" id="6373236at2759"/>
<dbReference type="PlantReactome" id="R-OSA-9640760">
    <property type="pathway name" value="G1 phase"/>
</dbReference>
<dbReference type="Proteomes" id="UP000000763">
    <property type="component" value="Chromosome 10"/>
</dbReference>
<dbReference type="Proteomes" id="UP000007752">
    <property type="component" value="Chromosome 10"/>
</dbReference>
<dbReference type="Proteomes" id="UP000059680">
    <property type="component" value="Chromosome 10"/>
</dbReference>
<dbReference type="ExpressionAtlas" id="Q7XDH8">
    <property type="expression patterns" value="baseline and differential"/>
</dbReference>
<dbReference type="GO" id="GO:0005634">
    <property type="term" value="C:nucleus"/>
    <property type="evidence" value="ECO:0007669"/>
    <property type="project" value="InterPro"/>
</dbReference>
<dbReference type="GO" id="GO:0004861">
    <property type="term" value="F:cyclin-dependent protein serine/threonine kinase inhibitor activity"/>
    <property type="evidence" value="ECO:0007669"/>
    <property type="project" value="InterPro"/>
</dbReference>
<dbReference type="GO" id="GO:0051726">
    <property type="term" value="P:regulation of cell cycle"/>
    <property type="evidence" value="ECO:0007669"/>
    <property type="project" value="InterPro"/>
</dbReference>
<dbReference type="Gene3D" id="4.10.365.10">
    <property type="entry name" value="p27"/>
    <property type="match status" value="1"/>
</dbReference>
<dbReference type="InterPro" id="IPR003175">
    <property type="entry name" value="CDI_dom"/>
</dbReference>
<dbReference type="InterPro" id="IPR044898">
    <property type="entry name" value="CDI_dom_sf"/>
</dbReference>
<dbReference type="InterPro" id="IPR044275">
    <property type="entry name" value="KRP"/>
</dbReference>
<dbReference type="PANTHER" id="PTHR46776">
    <property type="entry name" value="CYCLIN-DEPENDENT KINASE INHIBITOR 4-RELATED"/>
    <property type="match status" value="1"/>
</dbReference>
<dbReference type="Pfam" id="PF02234">
    <property type="entry name" value="CDI"/>
    <property type="match status" value="1"/>
</dbReference>
<dbReference type="PIRSF" id="PIRSF017811">
    <property type="entry name" value="CDK_inhib_pln"/>
    <property type="match status" value="1"/>
</dbReference>
<proteinExistence type="evidence at transcript level"/>
<reference key="1">
    <citation type="journal article" date="2006" name="Plant Physiol.">
        <title>The cyclin-dependent kinase inhibitor Orysa;KRP1 plays an important role in seed development of rice.</title>
        <authorList>
            <person name="Barroco R.M."/>
            <person name="Peres A."/>
            <person name="Droual A.-M."/>
            <person name="de Veylder L."/>
            <person name="Nguyen L.S.L."/>
            <person name="de Wolf J."/>
            <person name="Mironov V."/>
            <person name="Peerbolte R."/>
            <person name="Beemster G.T.S."/>
            <person name="Inze D."/>
            <person name="Broekaert W.F."/>
            <person name="Frankard V."/>
        </authorList>
    </citation>
    <scope>NUCLEOTIDE SEQUENCE [MRNA]</scope>
    <scope>DEVELOPMENTAL STAGE</scope>
</reference>
<reference key="2">
    <citation type="journal article" date="2003" name="Science">
        <title>In-depth view of structure, activity, and evolution of rice chromosome 10.</title>
        <authorList>
            <person name="Yu Y."/>
            <person name="Rambo T."/>
            <person name="Currie J."/>
            <person name="Saski C."/>
            <person name="Kim H.-R."/>
            <person name="Collura K."/>
            <person name="Thompson S."/>
            <person name="Simmons J."/>
            <person name="Yang T.-J."/>
            <person name="Nah G."/>
            <person name="Patel A.J."/>
            <person name="Thurmond S."/>
            <person name="Henry D."/>
            <person name="Oates R."/>
            <person name="Palmer M."/>
            <person name="Pries G."/>
            <person name="Gibson J."/>
            <person name="Anderson H."/>
            <person name="Paradkar M."/>
            <person name="Crane L."/>
            <person name="Dale J."/>
            <person name="Carver M.B."/>
            <person name="Wood T."/>
            <person name="Frisch D."/>
            <person name="Engler F."/>
            <person name="Soderlund C."/>
            <person name="Palmer L.E."/>
            <person name="Teytelman L."/>
            <person name="Nascimento L."/>
            <person name="De la Bastide M."/>
            <person name="Spiegel L."/>
            <person name="Ware D."/>
            <person name="O'Shaughnessy A."/>
            <person name="Dike S."/>
            <person name="Dedhia N."/>
            <person name="Preston R."/>
            <person name="Huang E."/>
            <person name="Ferraro K."/>
            <person name="Kuit K."/>
            <person name="Miller B."/>
            <person name="Zutavern T."/>
            <person name="Katzenberger F."/>
            <person name="Muller S."/>
            <person name="Balija V."/>
            <person name="Martienssen R.A."/>
            <person name="Stein L."/>
            <person name="Minx P."/>
            <person name="Johnson D."/>
            <person name="Cordum H."/>
            <person name="Mardis E."/>
            <person name="Cheng Z."/>
            <person name="Jiang J."/>
            <person name="Wilson R."/>
            <person name="McCombie W.R."/>
            <person name="Wing R.A."/>
            <person name="Yuan Q."/>
            <person name="Ouyang S."/>
            <person name="Liu J."/>
            <person name="Jones K.M."/>
            <person name="Gansberger K."/>
            <person name="Moffat K."/>
            <person name="Hill J."/>
            <person name="Tsitrin T."/>
            <person name="Overton L."/>
            <person name="Bera J."/>
            <person name="Kim M."/>
            <person name="Jin S."/>
            <person name="Tallon L."/>
            <person name="Ciecko A."/>
            <person name="Pai G."/>
            <person name="Van Aken S."/>
            <person name="Utterback T."/>
            <person name="Reidmuller S."/>
            <person name="Bormann J."/>
            <person name="Feldblyum T."/>
            <person name="Hsiao J."/>
            <person name="Zismann V."/>
            <person name="Blunt S."/>
            <person name="de Vazeille A.R."/>
            <person name="Shaffer T."/>
            <person name="Koo H."/>
            <person name="Suh B."/>
            <person name="Yang Q."/>
            <person name="Haas B."/>
            <person name="Peterson J."/>
            <person name="Pertea M."/>
            <person name="Volfovsky N."/>
            <person name="Wortman J."/>
            <person name="White O."/>
            <person name="Salzberg S.L."/>
            <person name="Fraser C.M."/>
            <person name="Buell C.R."/>
            <person name="Messing J."/>
            <person name="Song R."/>
            <person name="Fuks G."/>
            <person name="Llaca V."/>
            <person name="Kovchak S."/>
            <person name="Young S."/>
            <person name="Bowers J.E."/>
            <person name="Paterson A.H."/>
            <person name="Johns M.A."/>
            <person name="Mao L."/>
            <person name="Pan H."/>
            <person name="Dean R.A."/>
        </authorList>
    </citation>
    <scope>NUCLEOTIDE SEQUENCE [LARGE SCALE GENOMIC DNA]</scope>
    <source>
        <strain>cv. Nipponbare</strain>
    </source>
</reference>
<reference key="3">
    <citation type="journal article" date="2005" name="Nature">
        <title>The map-based sequence of the rice genome.</title>
        <authorList>
            <consortium name="International rice genome sequencing project (IRGSP)"/>
        </authorList>
    </citation>
    <scope>NUCLEOTIDE SEQUENCE [LARGE SCALE GENOMIC DNA]</scope>
    <source>
        <strain>cv. Nipponbare</strain>
    </source>
</reference>
<reference key="4">
    <citation type="journal article" date="2008" name="Nucleic Acids Res.">
        <title>The rice annotation project database (RAP-DB): 2008 update.</title>
        <authorList>
            <consortium name="The rice annotation project (RAP)"/>
        </authorList>
    </citation>
    <scope>GENOME REANNOTATION</scope>
    <source>
        <strain>cv. Nipponbare</strain>
    </source>
</reference>
<reference key="5">
    <citation type="journal article" date="2013" name="Rice">
        <title>Improvement of the Oryza sativa Nipponbare reference genome using next generation sequence and optical map data.</title>
        <authorList>
            <person name="Kawahara Y."/>
            <person name="de la Bastide M."/>
            <person name="Hamilton J.P."/>
            <person name="Kanamori H."/>
            <person name="McCombie W.R."/>
            <person name="Ouyang S."/>
            <person name="Schwartz D.C."/>
            <person name="Tanaka T."/>
            <person name="Wu J."/>
            <person name="Zhou S."/>
            <person name="Childs K.L."/>
            <person name="Davidson R.M."/>
            <person name="Lin H."/>
            <person name="Quesada-Ocampo L."/>
            <person name="Vaillancourt B."/>
            <person name="Sakai H."/>
            <person name="Lee S.S."/>
            <person name="Kim J."/>
            <person name="Numa H."/>
            <person name="Itoh T."/>
            <person name="Buell C.R."/>
            <person name="Matsumoto T."/>
        </authorList>
    </citation>
    <scope>GENOME REANNOTATION</scope>
    <source>
        <strain>cv. Nipponbare</strain>
    </source>
</reference>
<reference key="6">
    <citation type="journal article" date="2005" name="PLoS Biol.">
        <title>The genomes of Oryza sativa: a history of duplications.</title>
        <authorList>
            <person name="Yu J."/>
            <person name="Wang J."/>
            <person name="Lin W."/>
            <person name="Li S."/>
            <person name="Li H."/>
            <person name="Zhou J."/>
            <person name="Ni P."/>
            <person name="Dong W."/>
            <person name="Hu S."/>
            <person name="Zeng C."/>
            <person name="Zhang J."/>
            <person name="Zhang Y."/>
            <person name="Li R."/>
            <person name="Xu Z."/>
            <person name="Li S."/>
            <person name="Li X."/>
            <person name="Zheng H."/>
            <person name="Cong L."/>
            <person name="Lin L."/>
            <person name="Yin J."/>
            <person name="Geng J."/>
            <person name="Li G."/>
            <person name="Shi J."/>
            <person name="Liu J."/>
            <person name="Lv H."/>
            <person name="Li J."/>
            <person name="Wang J."/>
            <person name="Deng Y."/>
            <person name="Ran L."/>
            <person name="Shi X."/>
            <person name="Wang X."/>
            <person name="Wu Q."/>
            <person name="Li C."/>
            <person name="Ren X."/>
            <person name="Wang J."/>
            <person name="Wang X."/>
            <person name="Li D."/>
            <person name="Liu D."/>
            <person name="Zhang X."/>
            <person name="Ji Z."/>
            <person name="Zhao W."/>
            <person name="Sun Y."/>
            <person name="Zhang Z."/>
            <person name="Bao J."/>
            <person name="Han Y."/>
            <person name="Dong L."/>
            <person name="Ji J."/>
            <person name="Chen P."/>
            <person name="Wu S."/>
            <person name="Liu J."/>
            <person name="Xiao Y."/>
            <person name="Bu D."/>
            <person name="Tan J."/>
            <person name="Yang L."/>
            <person name="Ye C."/>
            <person name="Zhang J."/>
            <person name="Xu J."/>
            <person name="Zhou Y."/>
            <person name="Yu Y."/>
            <person name="Zhang B."/>
            <person name="Zhuang S."/>
            <person name="Wei H."/>
            <person name="Liu B."/>
            <person name="Lei M."/>
            <person name="Yu H."/>
            <person name="Li Y."/>
            <person name="Xu H."/>
            <person name="Wei S."/>
            <person name="He X."/>
            <person name="Fang L."/>
            <person name="Zhang Z."/>
            <person name="Zhang Y."/>
            <person name="Huang X."/>
            <person name="Su Z."/>
            <person name="Tong W."/>
            <person name="Li J."/>
            <person name="Tong Z."/>
            <person name="Li S."/>
            <person name="Ye J."/>
            <person name="Wang L."/>
            <person name="Fang L."/>
            <person name="Lei T."/>
            <person name="Chen C.-S."/>
            <person name="Chen H.-C."/>
            <person name="Xu Z."/>
            <person name="Li H."/>
            <person name="Huang H."/>
            <person name="Zhang F."/>
            <person name="Xu H."/>
            <person name="Li N."/>
            <person name="Zhao C."/>
            <person name="Li S."/>
            <person name="Dong L."/>
            <person name="Huang Y."/>
            <person name="Li L."/>
            <person name="Xi Y."/>
            <person name="Qi Q."/>
            <person name="Li W."/>
            <person name="Zhang B."/>
            <person name="Hu W."/>
            <person name="Zhang Y."/>
            <person name="Tian X."/>
            <person name="Jiao Y."/>
            <person name="Liang X."/>
            <person name="Jin J."/>
            <person name="Gao L."/>
            <person name="Zheng W."/>
            <person name="Hao B."/>
            <person name="Liu S.-M."/>
            <person name="Wang W."/>
            <person name="Yuan L."/>
            <person name="Cao M."/>
            <person name="McDermott J."/>
            <person name="Samudrala R."/>
            <person name="Wang J."/>
            <person name="Wong G.K.-S."/>
            <person name="Yang H."/>
        </authorList>
    </citation>
    <scope>NUCLEOTIDE SEQUENCE [LARGE SCALE GENOMIC DNA]</scope>
    <source>
        <strain>cv. Nipponbare</strain>
    </source>
</reference>
<reference key="7">
    <citation type="journal article" date="2003" name="Science">
        <title>Collection, mapping, and annotation of over 28,000 cDNA clones from japonica rice.</title>
        <authorList>
            <consortium name="The rice full-length cDNA consortium"/>
        </authorList>
    </citation>
    <scope>NUCLEOTIDE SEQUENCE [LARGE SCALE MRNA]</scope>
    <source>
        <strain>cv. Nipponbare</strain>
    </source>
</reference>
<reference key="8">
    <citation type="journal article" date="2007" name="Plant Mol. Biol.">
        <title>Genome-wide identification and expression analysis of rice cell cycle genes.</title>
        <authorList>
            <person name="Guo J."/>
            <person name="Song J."/>
            <person name="Wang F."/>
            <person name="Zhang X.S."/>
        </authorList>
    </citation>
    <scope>INDUCTION</scope>
    <scope>GENE FAMILY</scope>
</reference>
<evidence type="ECO:0000256" key="1">
    <source>
        <dbReference type="SAM" id="MobiDB-lite"/>
    </source>
</evidence>
<evidence type="ECO:0000269" key="2">
    <source>
    </source>
</evidence>
<evidence type="ECO:0000269" key="3">
    <source>
    </source>
</evidence>
<evidence type="ECO:0000305" key="4"/>
<sequence length="194" mass="21308">MGKYMRKAKVVVSGEVVAAAVMELAAAPLGVRTRARSLALQKRQGGEYLELRSRRLEKLPPPPPPPPRRRATAAAATADATAAESAEAEVSFGGENVLELEAMERNTRETTPCSLIRDPDTISTPGSTTRRSHSSSHCKVQTPVRHNIIPASAELEAFFAAEEQRQRQAFIDKYNFDPVNDCPLPGRFEWVKLD</sequence>
<gene>
    <name type="primary">KRP4</name>
    <name type="ordered locus">Os10g0471700</name>
    <name type="ordered locus">LOC_Os10g33310</name>
    <name type="ORF">OsJ_030605</name>
    <name type="ORF">OSJNBb0094K03.16</name>
</gene>
<comment type="developmental stage">
    <text evidence="2">Expressed at the time of pollination and then immediately decreases to basal level.</text>
</comment>
<comment type="induction">
    <text evidence="3">Down-regulated by cytokinin.</text>
</comment>
<comment type="similarity">
    <text evidence="4">Belongs to the CDI family. ICK/KRP subfamily.</text>
</comment>
<comment type="sequence caution" evidence="4">
    <conflict type="erroneous gene model prediction">
        <sequence resource="EMBL-CDS" id="AAG16867"/>
    </conflict>
</comment>
<keyword id="KW-0649">Protein kinase inhibitor</keyword>
<keyword id="KW-1185">Reference proteome</keyword>
<feature type="chain" id="PRO_0000295667" description="Cyclin-dependent kinase inhibitor 4">
    <location>
        <begin position="1"/>
        <end position="194"/>
    </location>
</feature>
<feature type="region of interest" description="Disordered" evidence="1">
    <location>
        <begin position="49"/>
        <end position="70"/>
    </location>
</feature>
<feature type="region of interest" description="Disordered" evidence="1">
    <location>
        <begin position="107"/>
        <end position="139"/>
    </location>
</feature>
<feature type="compositionally biased region" description="Basic and acidic residues" evidence="1">
    <location>
        <begin position="49"/>
        <end position="58"/>
    </location>
</feature>
<feature type="sequence conflict" description="In Ref. 6; EAZ16396." evidence="4" ref="6">
    <original>E</original>
    <variation>K</variation>
    <location>
        <position position="57"/>
    </location>
</feature>
<feature type="sequence conflict" description="In Ref. 6; EAZ16396." evidence="4" ref="6">
    <original>SA</original>
    <variation>NP</variation>
    <location>
        <begin position="85"/>
        <end position="86"/>
    </location>
</feature>
<protein>
    <recommendedName>
        <fullName>Cyclin-dependent kinase inhibitor 4</fullName>
    </recommendedName>
    <alternativeName>
        <fullName>KIP-related protein 4</fullName>
    </alternativeName>
</protein>